<keyword id="KW-0066">ATP synthesis</keyword>
<keyword id="KW-0067">ATP-binding</keyword>
<keyword id="KW-0997">Cell inner membrane</keyword>
<keyword id="KW-1003">Cell membrane</keyword>
<keyword id="KW-0139">CF(1)</keyword>
<keyword id="KW-0375">Hydrogen ion transport</keyword>
<keyword id="KW-0406">Ion transport</keyword>
<keyword id="KW-0472">Membrane</keyword>
<keyword id="KW-0547">Nucleotide-binding</keyword>
<keyword id="KW-1278">Translocase</keyword>
<keyword id="KW-0813">Transport</keyword>
<proteinExistence type="inferred from homology"/>
<reference key="1">
    <citation type="submission" date="2006-11" db="EMBL/GenBank/DDBJ databases">
        <title>Sequence of Campylobacter fetus subsp. fetus 82-40.</title>
        <authorList>
            <person name="Fouts D.E."/>
            <person name="Nelson K.E."/>
        </authorList>
    </citation>
    <scope>NUCLEOTIDE SEQUENCE [LARGE SCALE GENOMIC DNA]</scope>
    <source>
        <strain>82-40</strain>
    </source>
</reference>
<dbReference type="EC" id="7.1.2.2" evidence="1"/>
<dbReference type="EMBL" id="CP000487">
    <property type="protein sequence ID" value="ABK82450.1"/>
    <property type="molecule type" value="Genomic_DNA"/>
</dbReference>
<dbReference type="RefSeq" id="WP_002850540.1">
    <property type="nucleotide sequence ID" value="NC_008599.1"/>
</dbReference>
<dbReference type="SMR" id="A0RR26"/>
<dbReference type="GeneID" id="61065342"/>
<dbReference type="KEGG" id="cff:CFF8240_1525"/>
<dbReference type="eggNOG" id="COG0055">
    <property type="taxonomic scope" value="Bacteria"/>
</dbReference>
<dbReference type="HOGENOM" id="CLU_022398_0_2_7"/>
<dbReference type="Proteomes" id="UP000000760">
    <property type="component" value="Chromosome"/>
</dbReference>
<dbReference type="GO" id="GO:0005886">
    <property type="term" value="C:plasma membrane"/>
    <property type="evidence" value="ECO:0007669"/>
    <property type="project" value="UniProtKB-SubCell"/>
</dbReference>
<dbReference type="GO" id="GO:0045259">
    <property type="term" value="C:proton-transporting ATP synthase complex"/>
    <property type="evidence" value="ECO:0007669"/>
    <property type="project" value="UniProtKB-KW"/>
</dbReference>
<dbReference type="GO" id="GO:0005524">
    <property type="term" value="F:ATP binding"/>
    <property type="evidence" value="ECO:0007669"/>
    <property type="project" value="UniProtKB-UniRule"/>
</dbReference>
<dbReference type="GO" id="GO:0016887">
    <property type="term" value="F:ATP hydrolysis activity"/>
    <property type="evidence" value="ECO:0007669"/>
    <property type="project" value="InterPro"/>
</dbReference>
<dbReference type="GO" id="GO:0046933">
    <property type="term" value="F:proton-transporting ATP synthase activity, rotational mechanism"/>
    <property type="evidence" value="ECO:0007669"/>
    <property type="project" value="UniProtKB-UniRule"/>
</dbReference>
<dbReference type="CDD" id="cd18110">
    <property type="entry name" value="ATP-synt_F1_beta_C"/>
    <property type="match status" value="1"/>
</dbReference>
<dbReference type="CDD" id="cd18115">
    <property type="entry name" value="ATP-synt_F1_beta_N"/>
    <property type="match status" value="1"/>
</dbReference>
<dbReference type="CDD" id="cd01133">
    <property type="entry name" value="F1-ATPase_beta_CD"/>
    <property type="match status" value="1"/>
</dbReference>
<dbReference type="FunFam" id="1.10.1140.10:FF:000001">
    <property type="entry name" value="ATP synthase subunit beta"/>
    <property type="match status" value="1"/>
</dbReference>
<dbReference type="FunFam" id="3.40.50.300:FF:000004">
    <property type="entry name" value="ATP synthase subunit beta"/>
    <property type="match status" value="1"/>
</dbReference>
<dbReference type="Gene3D" id="2.40.10.170">
    <property type="match status" value="1"/>
</dbReference>
<dbReference type="Gene3D" id="1.10.1140.10">
    <property type="entry name" value="Bovine Mitochondrial F1-atpase, Atp Synthase Beta Chain, Chain D, domain 3"/>
    <property type="match status" value="1"/>
</dbReference>
<dbReference type="Gene3D" id="3.40.50.300">
    <property type="entry name" value="P-loop containing nucleotide triphosphate hydrolases"/>
    <property type="match status" value="1"/>
</dbReference>
<dbReference type="HAMAP" id="MF_01347">
    <property type="entry name" value="ATP_synth_beta_bact"/>
    <property type="match status" value="1"/>
</dbReference>
<dbReference type="InterPro" id="IPR003593">
    <property type="entry name" value="AAA+_ATPase"/>
</dbReference>
<dbReference type="InterPro" id="IPR055190">
    <property type="entry name" value="ATP-synt_VA_C"/>
</dbReference>
<dbReference type="InterPro" id="IPR005722">
    <property type="entry name" value="ATP_synth_F1_bsu"/>
</dbReference>
<dbReference type="InterPro" id="IPR020003">
    <property type="entry name" value="ATPase_a/bsu_AS"/>
</dbReference>
<dbReference type="InterPro" id="IPR050053">
    <property type="entry name" value="ATPase_alpha/beta_chains"/>
</dbReference>
<dbReference type="InterPro" id="IPR004100">
    <property type="entry name" value="ATPase_F1/V1/A1_a/bsu_N"/>
</dbReference>
<dbReference type="InterPro" id="IPR036121">
    <property type="entry name" value="ATPase_F1/V1/A1_a/bsu_N_sf"/>
</dbReference>
<dbReference type="InterPro" id="IPR000194">
    <property type="entry name" value="ATPase_F1/V1/A1_a/bsu_nucl-bd"/>
</dbReference>
<dbReference type="InterPro" id="IPR024034">
    <property type="entry name" value="ATPase_F1/V1_b/a_C"/>
</dbReference>
<dbReference type="InterPro" id="IPR027417">
    <property type="entry name" value="P-loop_NTPase"/>
</dbReference>
<dbReference type="NCBIfam" id="TIGR01039">
    <property type="entry name" value="atpD"/>
    <property type="match status" value="1"/>
</dbReference>
<dbReference type="PANTHER" id="PTHR15184">
    <property type="entry name" value="ATP SYNTHASE"/>
    <property type="match status" value="1"/>
</dbReference>
<dbReference type="PANTHER" id="PTHR15184:SF71">
    <property type="entry name" value="ATP SYNTHASE SUBUNIT BETA, MITOCHONDRIAL"/>
    <property type="match status" value="1"/>
</dbReference>
<dbReference type="Pfam" id="PF00006">
    <property type="entry name" value="ATP-synt_ab"/>
    <property type="match status" value="1"/>
</dbReference>
<dbReference type="Pfam" id="PF02874">
    <property type="entry name" value="ATP-synt_ab_N"/>
    <property type="match status" value="1"/>
</dbReference>
<dbReference type="Pfam" id="PF22919">
    <property type="entry name" value="ATP-synt_VA_C"/>
    <property type="match status" value="1"/>
</dbReference>
<dbReference type="SMART" id="SM00382">
    <property type="entry name" value="AAA"/>
    <property type="match status" value="1"/>
</dbReference>
<dbReference type="SUPFAM" id="SSF47917">
    <property type="entry name" value="C-terminal domain of alpha and beta subunits of F1 ATP synthase"/>
    <property type="match status" value="1"/>
</dbReference>
<dbReference type="SUPFAM" id="SSF50615">
    <property type="entry name" value="N-terminal domain of alpha and beta subunits of F1 ATP synthase"/>
    <property type="match status" value="1"/>
</dbReference>
<dbReference type="SUPFAM" id="SSF52540">
    <property type="entry name" value="P-loop containing nucleoside triphosphate hydrolases"/>
    <property type="match status" value="1"/>
</dbReference>
<dbReference type="PROSITE" id="PS00152">
    <property type="entry name" value="ATPASE_ALPHA_BETA"/>
    <property type="match status" value="1"/>
</dbReference>
<comment type="function">
    <text evidence="1">Produces ATP from ADP in the presence of a proton gradient across the membrane. The catalytic sites are hosted primarily by the beta subunits.</text>
</comment>
<comment type="catalytic activity">
    <reaction evidence="1">
        <text>ATP + H2O + 4 H(+)(in) = ADP + phosphate + 5 H(+)(out)</text>
        <dbReference type="Rhea" id="RHEA:57720"/>
        <dbReference type="ChEBI" id="CHEBI:15377"/>
        <dbReference type="ChEBI" id="CHEBI:15378"/>
        <dbReference type="ChEBI" id="CHEBI:30616"/>
        <dbReference type="ChEBI" id="CHEBI:43474"/>
        <dbReference type="ChEBI" id="CHEBI:456216"/>
        <dbReference type="EC" id="7.1.2.2"/>
    </reaction>
</comment>
<comment type="subunit">
    <text evidence="1">F-type ATPases have 2 components, CF(1) - the catalytic core - and CF(0) - the membrane proton channel. CF(1) has five subunits: alpha(3), beta(3), gamma(1), delta(1), epsilon(1). CF(0) has three main subunits: a(1), b(2) and c(9-12). The alpha and beta chains form an alternating ring which encloses part of the gamma chain. CF(1) is attached to CF(0) by a central stalk formed by the gamma and epsilon chains, while a peripheral stalk is formed by the delta and b chains.</text>
</comment>
<comment type="subcellular location">
    <subcellularLocation>
        <location evidence="1">Cell inner membrane</location>
        <topology evidence="1">Peripheral membrane protein</topology>
    </subcellularLocation>
</comment>
<comment type="similarity">
    <text evidence="1">Belongs to the ATPase alpha/beta chains family.</text>
</comment>
<accession>A0RR26</accession>
<gene>
    <name evidence="1" type="primary">atpD</name>
    <name type="ordered locus">CFF8240_1525</name>
</gene>
<evidence type="ECO:0000255" key="1">
    <source>
        <dbReference type="HAMAP-Rule" id="MF_01347"/>
    </source>
</evidence>
<name>ATPB_CAMFF</name>
<organism>
    <name type="scientific">Campylobacter fetus subsp. fetus (strain 82-40)</name>
    <dbReference type="NCBI Taxonomy" id="360106"/>
    <lineage>
        <taxon>Bacteria</taxon>
        <taxon>Pseudomonadati</taxon>
        <taxon>Campylobacterota</taxon>
        <taxon>Epsilonproteobacteria</taxon>
        <taxon>Campylobacterales</taxon>
        <taxon>Campylobacteraceae</taxon>
        <taxon>Campylobacter</taxon>
    </lineage>
</organism>
<feature type="chain" id="PRO_0000339503" description="ATP synthase subunit beta">
    <location>
        <begin position="1"/>
        <end position="465"/>
    </location>
</feature>
<feature type="binding site" evidence="1">
    <location>
        <begin position="152"/>
        <end position="159"/>
    </location>
    <ligand>
        <name>ATP</name>
        <dbReference type="ChEBI" id="CHEBI:30616"/>
    </ligand>
</feature>
<sequence length="465" mass="50929">MKGIISQVMGPVVDVDFKDYLPKINEAIEVNFTVEGNTHKLILETAAHLGDNRVRTIAMDMSEGLTRGLDAIALGSPISVPVGEKVLGRIFNVIGDLIDEGEEEKFDKKWSIHRDPPAFEDQSTKSEIFETGIKVVDLLAPYAKGGKVGLFGGAGVGKTVIIMELIHNVAFKHSGYSVFAGVGERTREGNDLYNEMKESGVLDKVALCYGQMNEPPGARNRIALTGLTMAEYFRDEMGLDVLMFIDNIFRFSQSGSEMSALLGRIPSAVGYQPTLASEMGRLQERITSTKKGSITSVQAVYVPADDLTDPAPATVFAHLDATTVLNRAIAEKGIYPAVDPLDSTSRMLDPQILGEEHYKIARGVQAVLQKYKDLQDIIAILGMDELSEEDKLTVDRARKIEKYLSQPFFVAEVFTGSPGKYVSLEETIAGFKGILEGKYDQLPENAFYMVGNIDEAIAKAEKMRA</sequence>
<protein>
    <recommendedName>
        <fullName evidence="1">ATP synthase subunit beta</fullName>
        <ecNumber evidence="1">7.1.2.2</ecNumber>
    </recommendedName>
    <alternativeName>
        <fullName evidence="1">ATP synthase F1 sector subunit beta</fullName>
    </alternativeName>
    <alternativeName>
        <fullName evidence="1">F-ATPase subunit beta</fullName>
    </alternativeName>
</protein>